<reference key="1">
    <citation type="journal article" date="2009" name="Science">
        <title>The dynamics and time scale of ongoing genomic erosion in symbiotic bacteria.</title>
        <authorList>
            <person name="Moran N.A."/>
            <person name="McLaughlin H.J."/>
            <person name="Sorek R."/>
        </authorList>
    </citation>
    <scope>NUCLEOTIDE SEQUENCE [LARGE SCALE GENOMIC DNA]</scope>
    <source>
        <strain>Tuc7</strain>
    </source>
</reference>
<accession>B8D7R0</accession>
<sequence length="707" mass="78234">MLNPIVRKFQYGQHTITLETGVIARQANAAVMASMDETAVFVTVVGQKKIHTGQKFFPLTVNYQERTYAAGRIPGGFFRREGRPSENEILTARLIDRPLRPLFPKKFLNEIQIIATVVSVNPQINPDIISIIGASAALSLSGIPFYGPVGAARVGYINNQYILNPISDDMKNSSLDLVVSGTQNAILMVEAESKILSEEKILGAIIFGHQQQQVVINNIRSLSNEASKLPWVISYPETNKTLELKIINSFEKNISDAYVIFNKQDRIEKLNSIKENIIKLFLDENSNIDTLEIEDIFQKIEKKVVRKRILSNQTRIDGREKDMIRALDVRTGILPRTHGSALFTRGETQSLVSVTLGTSRDAQNLDELLGDRIDNFLFHYNFPPYSVGEIGMVGSPKRREIGHGRLAKRSLLAVMPTLENFPYTIRVVSEITESNGSSSMASVCGASLALMDAGVPIKSAVAGISMGLVKEGNQHVLLSDILGDEDHLGDMDFKVAGTEEGITALQMDMKIEGITNEIIHSALNEARLARLHILNVMNQALNESRSEISEFAPRIHIIKINPEKIKDVIGKGGSVIRMLTEETGTIIEIEDDGTVKISSTVKEKAKNAIRRIKEITAEIEVGRIYSGKVTRIVDFGAFVSIGLGKEGLVHISQISDKRVDKVSNHLKIDQIISVKVLEIDRQGRLRLSIKEIDSSILSNKSINNSII</sequence>
<proteinExistence type="inferred from homology"/>
<name>PNP_BUCAT</name>
<gene>
    <name evidence="1" type="primary">pnp</name>
    <name type="ordered locus">BUAPTUC7_367</name>
</gene>
<feature type="chain" id="PRO_1000185727" description="Polyribonucleotide nucleotidyltransferase">
    <location>
        <begin position="1"/>
        <end position="707"/>
    </location>
</feature>
<feature type="domain" description="KH" evidence="1">
    <location>
        <begin position="553"/>
        <end position="612"/>
    </location>
</feature>
<feature type="domain" description="S1 motif" evidence="1">
    <location>
        <begin position="622"/>
        <end position="690"/>
    </location>
</feature>
<feature type="binding site" evidence="1">
    <location>
        <position position="486"/>
    </location>
    <ligand>
        <name>Mg(2+)</name>
        <dbReference type="ChEBI" id="CHEBI:18420"/>
    </ligand>
</feature>
<feature type="binding site" evidence="1">
    <location>
        <position position="492"/>
    </location>
    <ligand>
        <name>Mg(2+)</name>
        <dbReference type="ChEBI" id="CHEBI:18420"/>
    </ligand>
</feature>
<protein>
    <recommendedName>
        <fullName evidence="1">Polyribonucleotide nucleotidyltransferase</fullName>
        <ecNumber evidence="1">2.7.7.8</ecNumber>
    </recommendedName>
    <alternativeName>
        <fullName evidence="1">Polynucleotide phosphorylase</fullName>
        <shortName evidence="1">PNPase</shortName>
    </alternativeName>
</protein>
<comment type="function">
    <text evidence="1">Involved in mRNA degradation. Catalyzes the phosphorolysis of single-stranded polyribonucleotides processively in the 3'- to 5'-direction.</text>
</comment>
<comment type="catalytic activity">
    <reaction evidence="1">
        <text>RNA(n+1) + phosphate = RNA(n) + a ribonucleoside 5'-diphosphate</text>
        <dbReference type="Rhea" id="RHEA:22096"/>
        <dbReference type="Rhea" id="RHEA-COMP:14527"/>
        <dbReference type="Rhea" id="RHEA-COMP:17342"/>
        <dbReference type="ChEBI" id="CHEBI:43474"/>
        <dbReference type="ChEBI" id="CHEBI:57930"/>
        <dbReference type="ChEBI" id="CHEBI:140395"/>
        <dbReference type="EC" id="2.7.7.8"/>
    </reaction>
</comment>
<comment type="cofactor">
    <cofactor evidence="1">
        <name>Mg(2+)</name>
        <dbReference type="ChEBI" id="CHEBI:18420"/>
    </cofactor>
</comment>
<comment type="subunit">
    <text evidence="1">Component of the RNA degradosome, which is a multiprotein complex involved in RNA processing and mRNA degradation.</text>
</comment>
<comment type="subcellular location">
    <subcellularLocation>
        <location evidence="1">Cytoplasm</location>
    </subcellularLocation>
</comment>
<comment type="similarity">
    <text evidence="1">Belongs to the polyribonucleotide nucleotidyltransferase family.</text>
</comment>
<dbReference type="EC" id="2.7.7.8" evidence="1"/>
<dbReference type="EMBL" id="CP001158">
    <property type="protein sequence ID" value="ACL30175.1"/>
    <property type="molecule type" value="Genomic_DNA"/>
</dbReference>
<dbReference type="RefSeq" id="WP_009874331.1">
    <property type="nucleotide sequence ID" value="NC_011834.1"/>
</dbReference>
<dbReference type="SMR" id="B8D7R0"/>
<dbReference type="KEGG" id="bau:BUAPTUC7_367"/>
<dbReference type="HOGENOM" id="CLU_004217_2_2_6"/>
<dbReference type="GO" id="GO:0005829">
    <property type="term" value="C:cytosol"/>
    <property type="evidence" value="ECO:0007669"/>
    <property type="project" value="TreeGrafter"/>
</dbReference>
<dbReference type="GO" id="GO:0000175">
    <property type="term" value="F:3'-5'-RNA exonuclease activity"/>
    <property type="evidence" value="ECO:0007669"/>
    <property type="project" value="TreeGrafter"/>
</dbReference>
<dbReference type="GO" id="GO:0000287">
    <property type="term" value="F:magnesium ion binding"/>
    <property type="evidence" value="ECO:0007669"/>
    <property type="project" value="UniProtKB-UniRule"/>
</dbReference>
<dbReference type="GO" id="GO:0004654">
    <property type="term" value="F:polyribonucleotide nucleotidyltransferase activity"/>
    <property type="evidence" value="ECO:0007669"/>
    <property type="project" value="UniProtKB-UniRule"/>
</dbReference>
<dbReference type="GO" id="GO:0003723">
    <property type="term" value="F:RNA binding"/>
    <property type="evidence" value="ECO:0007669"/>
    <property type="project" value="UniProtKB-UniRule"/>
</dbReference>
<dbReference type="GO" id="GO:0006402">
    <property type="term" value="P:mRNA catabolic process"/>
    <property type="evidence" value="ECO:0007669"/>
    <property type="project" value="UniProtKB-UniRule"/>
</dbReference>
<dbReference type="GO" id="GO:0006396">
    <property type="term" value="P:RNA processing"/>
    <property type="evidence" value="ECO:0007669"/>
    <property type="project" value="InterPro"/>
</dbReference>
<dbReference type="CDD" id="cd02393">
    <property type="entry name" value="KH-I_PNPase"/>
    <property type="match status" value="1"/>
</dbReference>
<dbReference type="CDD" id="cd11363">
    <property type="entry name" value="RNase_PH_PNPase_1"/>
    <property type="match status" value="1"/>
</dbReference>
<dbReference type="CDD" id="cd11364">
    <property type="entry name" value="RNase_PH_PNPase_2"/>
    <property type="match status" value="1"/>
</dbReference>
<dbReference type="CDD" id="cd04472">
    <property type="entry name" value="S1_PNPase"/>
    <property type="match status" value="1"/>
</dbReference>
<dbReference type="FunFam" id="2.40.50.140:FF:000023">
    <property type="entry name" value="Polyribonucleotide nucleotidyltransferase"/>
    <property type="match status" value="1"/>
</dbReference>
<dbReference type="FunFam" id="3.30.1370.10:FF:000001">
    <property type="entry name" value="Polyribonucleotide nucleotidyltransferase"/>
    <property type="match status" value="1"/>
</dbReference>
<dbReference type="FunFam" id="3.30.230.70:FF:000001">
    <property type="entry name" value="Polyribonucleotide nucleotidyltransferase"/>
    <property type="match status" value="1"/>
</dbReference>
<dbReference type="FunFam" id="3.30.230.70:FF:000002">
    <property type="entry name" value="Polyribonucleotide nucleotidyltransferase"/>
    <property type="match status" value="1"/>
</dbReference>
<dbReference type="Gene3D" id="3.30.230.70">
    <property type="entry name" value="GHMP Kinase, N-terminal domain"/>
    <property type="match status" value="2"/>
</dbReference>
<dbReference type="Gene3D" id="3.30.1370.10">
    <property type="entry name" value="K Homology domain, type 1"/>
    <property type="match status" value="1"/>
</dbReference>
<dbReference type="Gene3D" id="2.40.50.140">
    <property type="entry name" value="Nucleic acid-binding proteins"/>
    <property type="match status" value="1"/>
</dbReference>
<dbReference type="HAMAP" id="MF_01595">
    <property type="entry name" value="PNPase"/>
    <property type="match status" value="1"/>
</dbReference>
<dbReference type="InterPro" id="IPR001247">
    <property type="entry name" value="ExoRNase_PH_dom1"/>
</dbReference>
<dbReference type="InterPro" id="IPR015847">
    <property type="entry name" value="ExoRNase_PH_dom2"/>
</dbReference>
<dbReference type="InterPro" id="IPR036345">
    <property type="entry name" value="ExoRNase_PH_dom2_sf"/>
</dbReference>
<dbReference type="InterPro" id="IPR004087">
    <property type="entry name" value="KH_dom"/>
</dbReference>
<dbReference type="InterPro" id="IPR004088">
    <property type="entry name" value="KH_dom_type_1"/>
</dbReference>
<dbReference type="InterPro" id="IPR036612">
    <property type="entry name" value="KH_dom_type_1_sf"/>
</dbReference>
<dbReference type="InterPro" id="IPR012340">
    <property type="entry name" value="NA-bd_OB-fold"/>
</dbReference>
<dbReference type="InterPro" id="IPR012162">
    <property type="entry name" value="PNPase"/>
</dbReference>
<dbReference type="InterPro" id="IPR027408">
    <property type="entry name" value="PNPase/RNase_PH_dom_sf"/>
</dbReference>
<dbReference type="InterPro" id="IPR015848">
    <property type="entry name" value="PNPase_PH_RNA-bd_bac/org-type"/>
</dbReference>
<dbReference type="InterPro" id="IPR036456">
    <property type="entry name" value="PNPase_PH_RNA-bd_sf"/>
</dbReference>
<dbReference type="InterPro" id="IPR020568">
    <property type="entry name" value="Ribosomal_Su5_D2-typ_SF"/>
</dbReference>
<dbReference type="InterPro" id="IPR003029">
    <property type="entry name" value="S1_domain"/>
</dbReference>
<dbReference type="NCBIfam" id="TIGR03591">
    <property type="entry name" value="polynuc_phos"/>
    <property type="match status" value="1"/>
</dbReference>
<dbReference type="NCBIfam" id="NF008805">
    <property type="entry name" value="PRK11824.1"/>
    <property type="match status" value="1"/>
</dbReference>
<dbReference type="PANTHER" id="PTHR11252">
    <property type="entry name" value="POLYRIBONUCLEOTIDE NUCLEOTIDYLTRANSFERASE"/>
    <property type="match status" value="1"/>
</dbReference>
<dbReference type="PANTHER" id="PTHR11252:SF0">
    <property type="entry name" value="POLYRIBONUCLEOTIDE NUCLEOTIDYLTRANSFERASE 1, MITOCHONDRIAL"/>
    <property type="match status" value="1"/>
</dbReference>
<dbReference type="Pfam" id="PF00013">
    <property type="entry name" value="KH_1"/>
    <property type="match status" value="1"/>
</dbReference>
<dbReference type="Pfam" id="PF03726">
    <property type="entry name" value="PNPase"/>
    <property type="match status" value="1"/>
</dbReference>
<dbReference type="Pfam" id="PF01138">
    <property type="entry name" value="RNase_PH"/>
    <property type="match status" value="2"/>
</dbReference>
<dbReference type="Pfam" id="PF03725">
    <property type="entry name" value="RNase_PH_C"/>
    <property type="match status" value="2"/>
</dbReference>
<dbReference type="Pfam" id="PF00575">
    <property type="entry name" value="S1"/>
    <property type="match status" value="1"/>
</dbReference>
<dbReference type="PIRSF" id="PIRSF005499">
    <property type="entry name" value="PNPase"/>
    <property type="match status" value="1"/>
</dbReference>
<dbReference type="SMART" id="SM00322">
    <property type="entry name" value="KH"/>
    <property type="match status" value="1"/>
</dbReference>
<dbReference type="SMART" id="SM00316">
    <property type="entry name" value="S1"/>
    <property type="match status" value="1"/>
</dbReference>
<dbReference type="SUPFAM" id="SSF54791">
    <property type="entry name" value="Eukaryotic type KH-domain (KH-domain type I)"/>
    <property type="match status" value="1"/>
</dbReference>
<dbReference type="SUPFAM" id="SSF50249">
    <property type="entry name" value="Nucleic acid-binding proteins"/>
    <property type="match status" value="1"/>
</dbReference>
<dbReference type="SUPFAM" id="SSF46915">
    <property type="entry name" value="Polynucleotide phosphorylase/guanosine pentaphosphate synthase (PNPase/GPSI), domain 3"/>
    <property type="match status" value="1"/>
</dbReference>
<dbReference type="SUPFAM" id="SSF55666">
    <property type="entry name" value="Ribonuclease PH domain 2-like"/>
    <property type="match status" value="2"/>
</dbReference>
<dbReference type="SUPFAM" id="SSF54211">
    <property type="entry name" value="Ribosomal protein S5 domain 2-like"/>
    <property type="match status" value="2"/>
</dbReference>
<dbReference type="PROSITE" id="PS50084">
    <property type="entry name" value="KH_TYPE_1"/>
    <property type="match status" value="1"/>
</dbReference>
<dbReference type="PROSITE" id="PS50126">
    <property type="entry name" value="S1"/>
    <property type="match status" value="1"/>
</dbReference>
<organism>
    <name type="scientific">Buchnera aphidicola subsp. Acyrthosiphon pisum (strain Tuc7)</name>
    <dbReference type="NCBI Taxonomy" id="561501"/>
    <lineage>
        <taxon>Bacteria</taxon>
        <taxon>Pseudomonadati</taxon>
        <taxon>Pseudomonadota</taxon>
        <taxon>Gammaproteobacteria</taxon>
        <taxon>Enterobacterales</taxon>
        <taxon>Erwiniaceae</taxon>
        <taxon>Buchnera</taxon>
    </lineage>
</organism>
<keyword id="KW-0963">Cytoplasm</keyword>
<keyword id="KW-0460">Magnesium</keyword>
<keyword id="KW-0479">Metal-binding</keyword>
<keyword id="KW-0548">Nucleotidyltransferase</keyword>
<keyword id="KW-0694">RNA-binding</keyword>
<keyword id="KW-0808">Transferase</keyword>
<evidence type="ECO:0000255" key="1">
    <source>
        <dbReference type="HAMAP-Rule" id="MF_01595"/>
    </source>
</evidence>